<accession>P51987</accession>
<protein>
    <recommendedName>
        <fullName>G2/mitotic-specific cyclin-B</fullName>
    </recommendedName>
</protein>
<comment type="function">
    <text evidence="1">Essential for the control of the cell cycle at the G2/M (mitosis) transition. Interacts with the CDC2 protein kinase to form MPF. G2/M cyclins accumulate steadily during G2 and are abruptly destroyed at mitosis (By similarity).</text>
</comment>
<comment type="similarity">
    <text evidence="2">Belongs to the cyclin family. Cyclin AB subfamily.</text>
</comment>
<dbReference type="EMBL" id="X90984">
    <property type="protein sequence ID" value="CAA62471.1"/>
    <property type="molecule type" value="mRNA"/>
</dbReference>
<dbReference type="SMR" id="P51987"/>
<dbReference type="GO" id="GO:0016538">
    <property type="term" value="F:cyclin-dependent protein serine/threonine kinase regulator activity"/>
    <property type="evidence" value="ECO:0007669"/>
    <property type="project" value="InterPro"/>
</dbReference>
<dbReference type="GO" id="GO:0051301">
    <property type="term" value="P:cell division"/>
    <property type="evidence" value="ECO:0007669"/>
    <property type="project" value="UniProtKB-KW"/>
</dbReference>
<dbReference type="GO" id="GO:0044772">
    <property type="term" value="P:mitotic cell cycle phase transition"/>
    <property type="evidence" value="ECO:0007669"/>
    <property type="project" value="InterPro"/>
</dbReference>
<dbReference type="CDD" id="cd20507">
    <property type="entry name" value="CYCLIN_CCNB1-like_rpt1"/>
    <property type="match status" value="1"/>
</dbReference>
<dbReference type="CDD" id="cd20509">
    <property type="entry name" value="CYCLIN_CCNB1-like_rpt2"/>
    <property type="match status" value="1"/>
</dbReference>
<dbReference type="FunFam" id="1.10.472.10:FF:000001">
    <property type="entry name" value="G2/mitotic-specific cyclin"/>
    <property type="match status" value="1"/>
</dbReference>
<dbReference type="Gene3D" id="1.10.472.10">
    <property type="entry name" value="Cyclin-like"/>
    <property type="match status" value="2"/>
</dbReference>
<dbReference type="InterPro" id="IPR039361">
    <property type="entry name" value="Cyclin"/>
</dbReference>
<dbReference type="InterPro" id="IPR013763">
    <property type="entry name" value="Cyclin-like_dom"/>
</dbReference>
<dbReference type="InterPro" id="IPR036915">
    <property type="entry name" value="Cyclin-like_sf"/>
</dbReference>
<dbReference type="InterPro" id="IPR046965">
    <property type="entry name" value="Cyclin_A/B-like"/>
</dbReference>
<dbReference type="InterPro" id="IPR004367">
    <property type="entry name" value="Cyclin_C-dom"/>
</dbReference>
<dbReference type="InterPro" id="IPR006671">
    <property type="entry name" value="Cyclin_N"/>
</dbReference>
<dbReference type="InterPro" id="IPR048258">
    <property type="entry name" value="Cyclins_cyclin-box"/>
</dbReference>
<dbReference type="PANTHER" id="PTHR10177">
    <property type="entry name" value="CYCLINS"/>
    <property type="match status" value="1"/>
</dbReference>
<dbReference type="Pfam" id="PF02984">
    <property type="entry name" value="Cyclin_C"/>
    <property type="match status" value="1"/>
</dbReference>
<dbReference type="Pfam" id="PF00134">
    <property type="entry name" value="Cyclin_N"/>
    <property type="match status" value="1"/>
</dbReference>
<dbReference type="PIRSF" id="PIRSF001771">
    <property type="entry name" value="Cyclin_A_B_D_E"/>
    <property type="match status" value="1"/>
</dbReference>
<dbReference type="SMART" id="SM00385">
    <property type="entry name" value="CYCLIN"/>
    <property type="match status" value="2"/>
</dbReference>
<dbReference type="SMART" id="SM01332">
    <property type="entry name" value="Cyclin_C"/>
    <property type="match status" value="1"/>
</dbReference>
<dbReference type="SUPFAM" id="SSF47954">
    <property type="entry name" value="Cyclin-like"/>
    <property type="match status" value="2"/>
</dbReference>
<dbReference type="PROSITE" id="PS00292">
    <property type="entry name" value="CYCLINS"/>
    <property type="match status" value="1"/>
</dbReference>
<sequence>MAGVQRRILISRNEENLLNKGIGTKNVLGGKTTSTRTALSNISNIQRRPQLGGKVKKEDVGALEEKAPTNKSLGRMISQTNLLNEVQMKKNIQNLEDMAEVDLPINSMIDSFTDLEVDDIDLEDLGNPTLCAEYVKDIYKYMNKLEQRLVPGDYMPNQTEINFKMRSILVDWLIQVQSRFNLLQETLYLTIYILDRFLNKQNVKRAELQLVGVTAMLLASKYEEMYAPEIGDFVYITDNAYSKEKIRQMEQKMLKACEYDFSNPLCLHFLRRNSKAGAVDAQKHTLAKYLMELTLVEYEFITKLPSEVAAAALYLSMKLIDDSNWTPTLVHYSGYTEDAILPTVSKLSVLTLSMDNSKYQAVKNKYAASKFLRISRIPQLKGHVLNKFAERI</sequence>
<evidence type="ECO:0000250" key="1"/>
<evidence type="ECO:0000305" key="2"/>
<keyword id="KW-0131">Cell cycle</keyword>
<keyword id="KW-0132">Cell division</keyword>
<keyword id="KW-0195">Cyclin</keyword>
<keyword id="KW-0498">Mitosis</keyword>
<feature type="chain" id="PRO_0000080382" description="G2/mitotic-specific cyclin-B">
    <location>
        <begin position="1"/>
        <end position="392"/>
    </location>
</feature>
<name>CCNB_HYDVD</name>
<proteinExistence type="evidence at transcript level"/>
<organism>
    <name type="scientific">Hydra viridissima</name>
    <name type="common">Green hydra</name>
    <name type="synonym">Chlorohydra viridissima</name>
    <dbReference type="NCBI Taxonomy" id="6082"/>
    <lineage>
        <taxon>Eukaryota</taxon>
        <taxon>Metazoa</taxon>
        <taxon>Cnidaria</taxon>
        <taxon>Hydrozoa</taxon>
        <taxon>Hydroidolina</taxon>
        <taxon>Anthoathecata</taxon>
        <taxon>Aplanulata</taxon>
        <taxon>Hydridae</taxon>
        <taxon>Hydra</taxon>
    </lineage>
</organism>
<reference key="1">
    <citation type="journal article" date="1996" name="J. Cell Sci.">
        <title>Presence and expression of G2 cyclins in the coelenterate hydra.</title>
        <authorList>
            <person name="Scheurlen-Blchle I."/>
            <person name="Hoffmeister S."/>
            <person name="Herrmans-Borgmeyer I."/>
            <person name="Schaller H.C."/>
        </authorList>
    </citation>
    <scope>NUCLEOTIDE SEQUENCE [MRNA]</scope>
</reference>